<accession>Q6DAL7</accession>
<comment type="function">
    <text evidence="1">Catalyzes the decarboxylation of four acetate groups of uroporphyrinogen-III to yield coproporphyrinogen-III.</text>
</comment>
<comment type="catalytic activity">
    <reaction evidence="1">
        <text>uroporphyrinogen III + 4 H(+) = coproporphyrinogen III + 4 CO2</text>
        <dbReference type="Rhea" id="RHEA:19865"/>
        <dbReference type="ChEBI" id="CHEBI:15378"/>
        <dbReference type="ChEBI" id="CHEBI:16526"/>
        <dbReference type="ChEBI" id="CHEBI:57308"/>
        <dbReference type="ChEBI" id="CHEBI:57309"/>
        <dbReference type="EC" id="4.1.1.37"/>
    </reaction>
</comment>
<comment type="pathway">
    <text evidence="1">Porphyrin-containing compound metabolism; protoporphyrin-IX biosynthesis; coproporphyrinogen-III from 5-aminolevulinate: step 4/4.</text>
</comment>
<comment type="subunit">
    <text evidence="1">Homodimer.</text>
</comment>
<comment type="subcellular location">
    <subcellularLocation>
        <location evidence="1">Cytoplasm</location>
    </subcellularLocation>
</comment>
<comment type="similarity">
    <text evidence="1">Belongs to the uroporphyrinogen decarboxylase family.</text>
</comment>
<name>DCUP_PECAS</name>
<keyword id="KW-0963">Cytoplasm</keyword>
<keyword id="KW-0210">Decarboxylase</keyword>
<keyword id="KW-0456">Lyase</keyword>
<keyword id="KW-0627">Porphyrin biosynthesis</keyword>
<keyword id="KW-1185">Reference proteome</keyword>
<organism>
    <name type="scientific">Pectobacterium atrosepticum (strain SCRI 1043 / ATCC BAA-672)</name>
    <name type="common">Erwinia carotovora subsp. atroseptica</name>
    <dbReference type="NCBI Taxonomy" id="218491"/>
    <lineage>
        <taxon>Bacteria</taxon>
        <taxon>Pseudomonadati</taxon>
        <taxon>Pseudomonadota</taxon>
        <taxon>Gammaproteobacteria</taxon>
        <taxon>Enterobacterales</taxon>
        <taxon>Pectobacteriaceae</taxon>
        <taxon>Pectobacterium</taxon>
    </lineage>
</organism>
<proteinExistence type="inferred from homology"/>
<feature type="chain" id="PRO_1000023906" description="Uroporphyrinogen decarboxylase">
    <location>
        <begin position="1"/>
        <end position="354"/>
    </location>
</feature>
<feature type="binding site" evidence="1">
    <location>
        <begin position="27"/>
        <end position="31"/>
    </location>
    <ligand>
        <name>substrate</name>
    </ligand>
</feature>
<feature type="binding site" evidence="1">
    <location>
        <position position="77"/>
    </location>
    <ligand>
        <name>substrate</name>
    </ligand>
</feature>
<feature type="binding site" evidence="1">
    <location>
        <position position="154"/>
    </location>
    <ligand>
        <name>substrate</name>
    </ligand>
</feature>
<feature type="binding site" evidence="1">
    <location>
        <position position="209"/>
    </location>
    <ligand>
        <name>substrate</name>
    </ligand>
</feature>
<feature type="binding site" evidence="1">
    <location>
        <position position="327"/>
    </location>
    <ligand>
        <name>substrate</name>
    </ligand>
</feature>
<feature type="site" description="Transition state stabilizer" evidence="1">
    <location>
        <position position="77"/>
    </location>
</feature>
<sequence>MTDLKNDRYLRALLRQPVDITPVWMMRQAGRYLPEYKATRAQAGDFMSLCKNAELACEVTLQPLRRYALDAAILFSDILTIPDAMGLGLYFEAGEGPRFHSPITSHADVVKLPVPDPEQELGYVMNAVRTIRKNLAGEVPLIGFSGSPWTLATYMVEGGSSKAFTVIKKMMFAEPKTLHLLLDKLADSVILYLNAQIRAGAQAVMVFDTWGGALSGRDYKEFSLHYMHKIVDSLQRENEGRRVPVTLFTKGGGQWLEAMAETGCDALGLDWTSDIADARRRVGDKVALQGNMDPSMLYADPARIEQEVASILAGFGQGNGHVFNLGHGIHQDVPPEHAGVFVEAVHRLSRAYHA</sequence>
<evidence type="ECO:0000255" key="1">
    <source>
        <dbReference type="HAMAP-Rule" id="MF_00218"/>
    </source>
</evidence>
<protein>
    <recommendedName>
        <fullName evidence="1">Uroporphyrinogen decarboxylase</fullName>
        <shortName evidence="1">UPD</shortName>
        <shortName evidence="1">URO-D</shortName>
        <ecNumber evidence="1">4.1.1.37</ecNumber>
    </recommendedName>
</protein>
<reference key="1">
    <citation type="journal article" date="2004" name="Proc. Natl. Acad. Sci. U.S.A.">
        <title>Genome sequence of the enterobacterial phytopathogen Erwinia carotovora subsp. atroseptica and characterization of virulence factors.</title>
        <authorList>
            <person name="Bell K.S."/>
            <person name="Sebaihia M."/>
            <person name="Pritchard L."/>
            <person name="Holden M.T.G."/>
            <person name="Hyman L.J."/>
            <person name="Holeva M.C."/>
            <person name="Thomson N.R."/>
            <person name="Bentley S.D."/>
            <person name="Churcher L.J.C."/>
            <person name="Mungall K."/>
            <person name="Atkin R."/>
            <person name="Bason N."/>
            <person name="Brooks K."/>
            <person name="Chillingworth T."/>
            <person name="Clark K."/>
            <person name="Doggett J."/>
            <person name="Fraser A."/>
            <person name="Hance Z."/>
            <person name="Hauser H."/>
            <person name="Jagels K."/>
            <person name="Moule S."/>
            <person name="Norbertczak H."/>
            <person name="Ormond D."/>
            <person name="Price C."/>
            <person name="Quail M.A."/>
            <person name="Sanders M."/>
            <person name="Walker D."/>
            <person name="Whitehead S."/>
            <person name="Salmond G.P.C."/>
            <person name="Birch P.R.J."/>
            <person name="Parkhill J."/>
            <person name="Toth I.K."/>
        </authorList>
    </citation>
    <scope>NUCLEOTIDE SEQUENCE [LARGE SCALE GENOMIC DNA]</scope>
    <source>
        <strain>SCRI 1043 / ATCC BAA-672</strain>
    </source>
</reference>
<dbReference type="EC" id="4.1.1.37" evidence="1"/>
<dbReference type="EMBL" id="BX950851">
    <property type="protein sequence ID" value="CAG73155.1"/>
    <property type="molecule type" value="Genomic_DNA"/>
</dbReference>
<dbReference type="RefSeq" id="WP_011091873.1">
    <property type="nucleotide sequence ID" value="NC_004547.2"/>
</dbReference>
<dbReference type="SMR" id="Q6DAL7"/>
<dbReference type="STRING" id="218491.ECA0235"/>
<dbReference type="KEGG" id="eca:ECA0235"/>
<dbReference type="PATRIC" id="fig|218491.5.peg.237"/>
<dbReference type="eggNOG" id="COG0407">
    <property type="taxonomic scope" value="Bacteria"/>
</dbReference>
<dbReference type="HOGENOM" id="CLU_040933_0_0_6"/>
<dbReference type="OrthoDB" id="9806656at2"/>
<dbReference type="UniPathway" id="UPA00251">
    <property type="reaction ID" value="UER00321"/>
</dbReference>
<dbReference type="Proteomes" id="UP000007966">
    <property type="component" value="Chromosome"/>
</dbReference>
<dbReference type="GO" id="GO:0005829">
    <property type="term" value="C:cytosol"/>
    <property type="evidence" value="ECO:0007669"/>
    <property type="project" value="TreeGrafter"/>
</dbReference>
<dbReference type="GO" id="GO:0004853">
    <property type="term" value="F:uroporphyrinogen decarboxylase activity"/>
    <property type="evidence" value="ECO:0007669"/>
    <property type="project" value="UniProtKB-UniRule"/>
</dbReference>
<dbReference type="GO" id="GO:0019353">
    <property type="term" value="P:protoporphyrinogen IX biosynthetic process from glutamate"/>
    <property type="evidence" value="ECO:0007669"/>
    <property type="project" value="TreeGrafter"/>
</dbReference>
<dbReference type="CDD" id="cd00717">
    <property type="entry name" value="URO-D"/>
    <property type="match status" value="1"/>
</dbReference>
<dbReference type="FunFam" id="3.20.20.210:FF:000001">
    <property type="entry name" value="Uroporphyrinogen decarboxylase"/>
    <property type="match status" value="1"/>
</dbReference>
<dbReference type="Gene3D" id="3.20.20.210">
    <property type="match status" value="1"/>
</dbReference>
<dbReference type="HAMAP" id="MF_00218">
    <property type="entry name" value="URO_D"/>
    <property type="match status" value="1"/>
</dbReference>
<dbReference type="InterPro" id="IPR038071">
    <property type="entry name" value="UROD/MetE-like_sf"/>
</dbReference>
<dbReference type="InterPro" id="IPR006361">
    <property type="entry name" value="Uroporphyrinogen_deCO2ase_HemE"/>
</dbReference>
<dbReference type="InterPro" id="IPR000257">
    <property type="entry name" value="Uroporphyrinogen_deCOase"/>
</dbReference>
<dbReference type="NCBIfam" id="TIGR01464">
    <property type="entry name" value="hemE"/>
    <property type="match status" value="1"/>
</dbReference>
<dbReference type="PANTHER" id="PTHR21091">
    <property type="entry name" value="METHYLTETRAHYDROFOLATE:HOMOCYSTEINE METHYLTRANSFERASE RELATED"/>
    <property type="match status" value="1"/>
</dbReference>
<dbReference type="PANTHER" id="PTHR21091:SF169">
    <property type="entry name" value="UROPORPHYRINOGEN DECARBOXYLASE"/>
    <property type="match status" value="1"/>
</dbReference>
<dbReference type="Pfam" id="PF01208">
    <property type="entry name" value="URO-D"/>
    <property type="match status" value="1"/>
</dbReference>
<dbReference type="SUPFAM" id="SSF51726">
    <property type="entry name" value="UROD/MetE-like"/>
    <property type="match status" value="1"/>
</dbReference>
<dbReference type="PROSITE" id="PS00906">
    <property type="entry name" value="UROD_1"/>
    <property type="match status" value="1"/>
</dbReference>
<dbReference type="PROSITE" id="PS00907">
    <property type="entry name" value="UROD_2"/>
    <property type="match status" value="1"/>
</dbReference>
<gene>
    <name evidence="1" type="primary">hemE</name>
    <name type="ordered locus">ECA0235</name>
</gene>